<evidence type="ECO:0000255" key="1"/>
<evidence type="ECO:0000305" key="2"/>
<protein>
    <recommendedName>
        <fullName>Proteases secretion protein PrtE</fullName>
    </recommendedName>
</protein>
<accession>P23597</accession>
<gene>
    <name type="primary">prtE</name>
</gene>
<sequence>MTGMDITTQDELNEAAMRDRASRDEERALRLGWWLVLAGFGGFLLWALLAPLDKGVAVQGNVVVSGNRKVIQHMQGGIVDRIQVKDGDRVAAGQVLLTLNAVDARTTSEGLGSQYDQLIAREARLLAEQRNQSSLAATPRLTQARQRPEMAAIIALQEDLLRSRQQSLKLEIDGVRASIDGLETSLGALQKVMSSKQSEQATLSQQLQGLRPLAADNYVPRNKMLETERLFAQVSGELAQTSGEVGRTRRDIQQQKLRIAQRQQEYDKEVNSELSDVQAKLNEVISQREKADFNLANVQVRAPVAGTVVDMKIFTEGGVIAPGQVMMDIVPEDQPLLVDGRIPVEMVDKVWSGLPVELQFTAFSQSTTPRVPGTVTLLSADRLVDEKDGTPYYGLRIQVSEEGKRSLHGLEIKPGMPVQGFVRTGERSFINYLFKPLMDRMHLALTEE</sequence>
<comment type="function">
    <text>Involved in the secretion of proteases A, B, C and G.</text>
</comment>
<comment type="subcellular location">
    <subcellularLocation>
        <location>Cell inner membrane</location>
        <topology>Single-pass membrane protein</topology>
    </subcellularLocation>
</comment>
<comment type="similarity">
    <text evidence="2">Belongs to the membrane fusion protein (MFP) (TC 8.A.1) family.</text>
</comment>
<dbReference type="EMBL" id="X53253">
    <property type="protein sequence ID" value="CAA37343.1"/>
    <property type="molecule type" value="Genomic_DNA"/>
</dbReference>
<dbReference type="EMBL" id="M60395">
    <property type="protein sequence ID" value="AAA63635.1"/>
    <property type="molecule type" value="Genomic_DNA"/>
</dbReference>
<dbReference type="PIR" id="S12526">
    <property type="entry name" value="S12526"/>
</dbReference>
<dbReference type="SMR" id="P23597"/>
<dbReference type="TCDB" id="3.A.1.110.11">
    <property type="family name" value="the atp-binding cassette (abc) superfamily"/>
</dbReference>
<dbReference type="GO" id="GO:0005886">
    <property type="term" value="C:plasma membrane"/>
    <property type="evidence" value="ECO:0007669"/>
    <property type="project" value="UniProtKB-SubCell"/>
</dbReference>
<dbReference type="GO" id="GO:0009306">
    <property type="term" value="P:protein secretion"/>
    <property type="evidence" value="ECO:0007669"/>
    <property type="project" value="InterPro"/>
</dbReference>
<dbReference type="GO" id="GO:0055085">
    <property type="term" value="P:transmembrane transport"/>
    <property type="evidence" value="ECO:0007669"/>
    <property type="project" value="InterPro"/>
</dbReference>
<dbReference type="Gene3D" id="2.40.50.100">
    <property type="match status" value="1"/>
</dbReference>
<dbReference type="InterPro" id="IPR050739">
    <property type="entry name" value="MFP"/>
</dbReference>
<dbReference type="InterPro" id="IPR006144">
    <property type="entry name" value="Secretion_HlyD_CS"/>
</dbReference>
<dbReference type="InterPro" id="IPR010129">
    <property type="entry name" value="T1SS_HlyD"/>
</dbReference>
<dbReference type="NCBIfam" id="TIGR01843">
    <property type="entry name" value="type_I_hlyD"/>
    <property type="match status" value="1"/>
</dbReference>
<dbReference type="PANTHER" id="PTHR30386:SF17">
    <property type="entry name" value="ALKALINE PROTEASE SECRETION PROTEIN APRE"/>
    <property type="match status" value="1"/>
</dbReference>
<dbReference type="PANTHER" id="PTHR30386">
    <property type="entry name" value="MEMBRANE FUSION SUBUNIT OF EMRAB-TOLC MULTIDRUG EFFLUX PUMP"/>
    <property type="match status" value="1"/>
</dbReference>
<dbReference type="Pfam" id="PF13437">
    <property type="entry name" value="HlyD_3"/>
    <property type="match status" value="1"/>
</dbReference>
<dbReference type="PRINTS" id="PR01490">
    <property type="entry name" value="RTXTOXIND"/>
</dbReference>
<dbReference type="PROSITE" id="PS00543">
    <property type="entry name" value="HLYD_FAMILY"/>
    <property type="match status" value="1"/>
</dbReference>
<reference key="1">
    <citation type="journal article" date="1990" name="EMBO J.">
        <title>Protease secretion by Erwinia chrysanthemi: the specific secretion functions are analogous to those of Escherichia coli alpha-haemolysin.</title>
        <authorList>
            <person name="Letoffe S."/>
            <person name="Delepelaire P."/>
            <person name="Wandersman C."/>
        </authorList>
    </citation>
    <scope>NUCLEOTIDE SEQUENCE [GENOMIC DNA]</scope>
</reference>
<keyword id="KW-0997">Cell inner membrane</keyword>
<keyword id="KW-1003">Cell membrane</keyword>
<keyword id="KW-0472">Membrane</keyword>
<keyword id="KW-0812">Transmembrane</keyword>
<keyword id="KW-1133">Transmembrane helix</keyword>
<keyword id="KW-0813">Transport</keyword>
<organism>
    <name type="scientific">Dickeya chrysanthemi</name>
    <name type="common">Pectobacterium chrysanthemi</name>
    <name type="synonym">Erwinia chrysanthemi</name>
    <dbReference type="NCBI Taxonomy" id="556"/>
    <lineage>
        <taxon>Bacteria</taxon>
        <taxon>Pseudomonadati</taxon>
        <taxon>Pseudomonadota</taxon>
        <taxon>Gammaproteobacteria</taxon>
        <taxon>Enterobacterales</taxon>
        <taxon>Pectobacteriaceae</taxon>
        <taxon>Dickeya</taxon>
    </lineage>
</organism>
<proteinExistence type="inferred from homology"/>
<feature type="chain" id="PRO_0000201890" description="Proteases secretion protein PrtE">
    <location>
        <begin position="1"/>
        <end position="448"/>
    </location>
</feature>
<feature type="topological domain" description="Cytoplasmic" evidence="1">
    <location>
        <begin position="1"/>
        <end position="30"/>
    </location>
</feature>
<feature type="transmembrane region" description="Helical" evidence="1">
    <location>
        <begin position="31"/>
        <end position="50"/>
    </location>
</feature>
<feature type="topological domain" description="Periplasmic" evidence="1">
    <location>
        <begin position="51"/>
        <end position="448"/>
    </location>
</feature>
<name>PRTE_DICCH</name>